<accession>Q4WW43</accession>
<keyword id="KW-0256">Endoplasmic reticulum</keyword>
<keyword id="KW-0325">Glycoprotein</keyword>
<keyword id="KW-0444">Lipid biosynthesis</keyword>
<keyword id="KW-0443">Lipid metabolism</keyword>
<keyword id="KW-0472">Membrane</keyword>
<keyword id="KW-0521">NADP</keyword>
<keyword id="KW-0560">Oxidoreductase</keyword>
<keyword id="KW-1185">Reference proteome</keyword>
<keyword id="KW-0752">Steroid biosynthesis</keyword>
<keyword id="KW-0753">Steroid metabolism</keyword>
<keyword id="KW-0756">Sterol biosynthesis</keyword>
<keyword id="KW-1207">Sterol metabolism</keyword>
<keyword id="KW-0812">Transmembrane</keyword>
<keyword id="KW-1133">Transmembrane helix</keyword>
<sequence>MKSKMAAKDQKRLDNASSSDTKIEFEFGGAPGVTLIMIGFPLLMYYMYIGAVLYDGLLPTPEDGQSWADFLSHLVSLAYTHAYPTRKAWTIYWTFLILEGAGYLYLPGVYGKGKRLPHLGGKQLPYYCSAVSSWYLTIAAALILHFTGVLKLYTLIDEFGPLMSVAICSGIFVSIVAYISALVRGVEHRMTGSHVYDFFMGAELNPRLFGWLDFKMFFEVRIPWFILFLLTLGTALKQLEEYGLVAGEVLFLLMAHFLYANACAKGEELIITSWDMYYEKWGFMLIFWNLAGVPMSYCHCTLYLAYHDPSTYHWNPWVLAVWAVAYLFMYWVWDTCNSQKNYFRAQERGVTVDRKTFPQLPWKYIENPQSIPTKTGDSILCSGWFGMARKVHYTCDVFFAISWGLITGFNSPFPWFYPCFFTVMIIHRARRDINRCRERYGEAWMEYERRVPYLFIPVSFADLPHKDKLTD</sequence>
<proteinExistence type="evidence at protein level"/>
<organism>
    <name type="scientific">Aspergillus fumigatus (strain ATCC MYA-4609 / CBS 101355 / FGSC A1100 / Af293)</name>
    <name type="common">Neosartorya fumigata</name>
    <dbReference type="NCBI Taxonomy" id="330879"/>
    <lineage>
        <taxon>Eukaryota</taxon>
        <taxon>Fungi</taxon>
        <taxon>Dikarya</taxon>
        <taxon>Ascomycota</taxon>
        <taxon>Pezizomycotina</taxon>
        <taxon>Eurotiomycetes</taxon>
        <taxon>Eurotiomycetidae</taxon>
        <taxon>Eurotiales</taxon>
        <taxon>Aspergillaceae</taxon>
        <taxon>Aspergillus</taxon>
        <taxon>Aspergillus subgen. Fumigati</taxon>
    </lineage>
</organism>
<name>ERG4A_ASPFU</name>
<dbReference type="EC" id="1.3.1.71" evidence="8"/>
<dbReference type="EMBL" id="AAHF01000003">
    <property type="protein sequence ID" value="EAL91183.1"/>
    <property type="molecule type" value="Genomic_DNA"/>
</dbReference>
<dbReference type="RefSeq" id="XP_753221.1">
    <property type="nucleotide sequence ID" value="XM_748128.1"/>
</dbReference>
<dbReference type="SMR" id="Q4WW43"/>
<dbReference type="FunCoup" id="Q4WW43">
    <property type="interactions" value="100"/>
</dbReference>
<dbReference type="STRING" id="330879.Q4WW43"/>
<dbReference type="GlyCosmos" id="Q4WW43">
    <property type="glycosylation" value="1 site, No reported glycans"/>
</dbReference>
<dbReference type="EnsemblFungi" id="EAL91183">
    <property type="protein sequence ID" value="EAL91183"/>
    <property type="gene ID" value="AFUA_5G14350"/>
</dbReference>
<dbReference type="GeneID" id="3511014"/>
<dbReference type="KEGG" id="afm:AFUA_5G14350"/>
<dbReference type="VEuPathDB" id="FungiDB:Afu5g14350"/>
<dbReference type="eggNOG" id="KOG1435">
    <property type="taxonomic scope" value="Eukaryota"/>
</dbReference>
<dbReference type="HOGENOM" id="CLU_015631_3_1_1"/>
<dbReference type="InParanoid" id="Q4WW43"/>
<dbReference type="OMA" id="HYSCDMF"/>
<dbReference type="OrthoDB" id="5326588at2759"/>
<dbReference type="UniPathway" id="UPA00768"/>
<dbReference type="Proteomes" id="UP000002530">
    <property type="component" value="Chromosome 5"/>
</dbReference>
<dbReference type="GO" id="GO:0005789">
    <property type="term" value="C:endoplasmic reticulum membrane"/>
    <property type="evidence" value="ECO:0000318"/>
    <property type="project" value="GO_Central"/>
</dbReference>
<dbReference type="GO" id="GO:0000246">
    <property type="term" value="F:Delta24(24-1) sterol reductase activity"/>
    <property type="evidence" value="ECO:0000318"/>
    <property type="project" value="GO_Central"/>
</dbReference>
<dbReference type="GO" id="GO:0006696">
    <property type="term" value="P:ergosterol biosynthetic process"/>
    <property type="evidence" value="ECO:0000318"/>
    <property type="project" value="GO_Central"/>
</dbReference>
<dbReference type="FunFam" id="1.20.120.1630:FF:000003">
    <property type="entry name" value="C-24(28) sterol reductase"/>
    <property type="match status" value="1"/>
</dbReference>
<dbReference type="Gene3D" id="1.20.120.1630">
    <property type="match status" value="1"/>
</dbReference>
<dbReference type="InterPro" id="IPR001171">
    <property type="entry name" value="ERG24_DHCR-like"/>
</dbReference>
<dbReference type="InterPro" id="IPR018083">
    <property type="entry name" value="Sterol_reductase_CS"/>
</dbReference>
<dbReference type="PANTHER" id="PTHR21257">
    <property type="entry name" value="DELTA(14)-STEROL REDUCTASE"/>
    <property type="match status" value="1"/>
</dbReference>
<dbReference type="PANTHER" id="PTHR21257:SF31">
    <property type="entry name" value="DELTA(24(24(1)))-STEROL REDUCTASE ERG4"/>
    <property type="match status" value="1"/>
</dbReference>
<dbReference type="Pfam" id="PF01222">
    <property type="entry name" value="ERG4_ERG24"/>
    <property type="match status" value="1"/>
</dbReference>
<dbReference type="PROSITE" id="PS01017">
    <property type="entry name" value="STEROL_REDUCT_1"/>
    <property type="match status" value="1"/>
</dbReference>
<evidence type="ECO:0000250" key="1">
    <source>
        <dbReference type="UniProtKB" id="G4SW86"/>
    </source>
</evidence>
<evidence type="ECO:0000255" key="2"/>
<evidence type="ECO:0000255" key="3">
    <source>
        <dbReference type="PROSITE-ProRule" id="PRU00498"/>
    </source>
</evidence>
<evidence type="ECO:0000269" key="4">
    <source>
    </source>
</evidence>
<evidence type="ECO:0000303" key="5">
    <source>
    </source>
</evidence>
<evidence type="ECO:0000303" key="6">
    <source>
    </source>
</evidence>
<evidence type="ECO:0000305" key="7"/>
<evidence type="ECO:0000305" key="8">
    <source>
    </source>
</evidence>
<evidence type="ECO:0000305" key="9">
    <source>
    </source>
</evidence>
<evidence type="ECO:0000305" key="10">
    <source>
    </source>
</evidence>
<feature type="chain" id="PRO_0000454120" description="Delta(24(24(1)))-sterol reductase erg4A">
    <location>
        <begin position="1"/>
        <end position="471"/>
    </location>
</feature>
<feature type="transmembrane region" description="Helical" evidence="2">
    <location>
        <begin position="33"/>
        <end position="53"/>
    </location>
</feature>
<feature type="transmembrane region" description="Helical" evidence="2">
    <location>
        <begin position="89"/>
        <end position="109"/>
    </location>
</feature>
<feature type="transmembrane region" description="Helical" evidence="2">
    <location>
        <begin position="130"/>
        <end position="150"/>
    </location>
</feature>
<feature type="transmembrane region" description="Helical" evidence="2">
    <location>
        <begin position="159"/>
        <end position="179"/>
    </location>
</feature>
<feature type="transmembrane region" description="Helical" evidence="2">
    <location>
        <begin position="216"/>
        <end position="236"/>
    </location>
</feature>
<feature type="transmembrane region" description="Helical" evidence="2">
    <location>
        <begin position="244"/>
        <end position="264"/>
    </location>
</feature>
<feature type="transmembrane region" description="Helical" evidence="2">
    <location>
        <begin position="282"/>
        <end position="302"/>
    </location>
</feature>
<feature type="transmembrane region" description="Helical" evidence="2">
    <location>
        <begin position="313"/>
        <end position="333"/>
    </location>
</feature>
<feature type="transmembrane region" description="Helical" evidence="2">
    <location>
        <begin position="397"/>
        <end position="417"/>
    </location>
</feature>
<feature type="binding site" evidence="1">
    <location>
        <position position="340"/>
    </location>
    <ligand>
        <name>NADP(+)</name>
        <dbReference type="ChEBI" id="CHEBI:58349"/>
    </ligand>
</feature>
<feature type="binding site" evidence="1">
    <location>
        <position position="344"/>
    </location>
    <ligand>
        <name>NADP(+)</name>
        <dbReference type="ChEBI" id="CHEBI:58349"/>
    </ligand>
</feature>
<feature type="binding site" evidence="1">
    <location>
        <position position="380"/>
    </location>
    <ligand>
        <name>NADP(+)</name>
        <dbReference type="ChEBI" id="CHEBI:58349"/>
    </ligand>
</feature>
<feature type="binding site" evidence="1">
    <location>
        <begin position="392"/>
        <end position="393"/>
    </location>
    <ligand>
        <name>NADP(+)</name>
        <dbReference type="ChEBI" id="CHEBI:58349"/>
    </ligand>
</feature>
<feature type="binding site" evidence="1">
    <location>
        <position position="432"/>
    </location>
    <ligand>
        <name>NADP(+)</name>
        <dbReference type="ChEBI" id="CHEBI:58349"/>
    </ligand>
</feature>
<feature type="binding site" evidence="1">
    <location>
        <begin position="436"/>
        <end position="440"/>
    </location>
    <ligand>
        <name>NADP(+)</name>
        <dbReference type="ChEBI" id="CHEBI:58349"/>
    </ligand>
</feature>
<feature type="binding site" evidence="1">
    <location>
        <position position="447"/>
    </location>
    <ligand>
        <name>NADP(+)</name>
        <dbReference type="ChEBI" id="CHEBI:58349"/>
    </ligand>
</feature>
<feature type="glycosylation site" description="N-linked (GlcNAc...) asparagine" evidence="3">
    <location>
        <position position="15"/>
    </location>
</feature>
<gene>
    <name evidence="6" type="primary">erg4A</name>
    <name type="ORF">AFUA_5G14350</name>
</gene>
<reference key="1">
    <citation type="journal article" date="2005" name="Nature">
        <title>Genomic sequence of the pathogenic and allergenic filamentous fungus Aspergillus fumigatus.</title>
        <authorList>
            <person name="Nierman W.C."/>
            <person name="Pain A."/>
            <person name="Anderson M.J."/>
            <person name="Wortman J.R."/>
            <person name="Kim H.S."/>
            <person name="Arroyo J."/>
            <person name="Berriman M."/>
            <person name="Abe K."/>
            <person name="Archer D.B."/>
            <person name="Bermejo C."/>
            <person name="Bennett J.W."/>
            <person name="Bowyer P."/>
            <person name="Chen D."/>
            <person name="Collins M."/>
            <person name="Coulsen R."/>
            <person name="Davies R."/>
            <person name="Dyer P.S."/>
            <person name="Farman M.L."/>
            <person name="Fedorova N."/>
            <person name="Fedorova N.D."/>
            <person name="Feldblyum T.V."/>
            <person name="Fischer R."/>
            <person name="Fosker N."/>
            <person name="Fraser A."/>
            <person name="Garcia J.L."/>
            <person name="Garcia M.J."/>
            <person name="Goble A."/>
            <person name="Goldman G.H."/>
            <person name="Gomi K."/>
            <person name="Griffith-Jones S."/>
            <person name="Gwilliam R."/>
            <person name="Haas B.J."/>
            <person name="Haas H."/>
            <person name="Harris D.E."/>
            <person name="Horiuchi H."/>
            <person name="Huang J."/>
            <person name="Humphray S."/>
            <person name="Jimenez J."/>
            <person name="Keller N."/>
            <person name="Khouri H."/>
            <person name="Kitamoto K."/>
            <person name="Kobayashi T."/>
            <person name="Konzack S."/>
            <person name="Kulkarni R."/>
            <person name="Kumagai T."/>
            <person name="Lafton A."/>
            <person name="Latge J.-P."/>
            <person name="Li W."/>
            <person name="Lord A."/>
            <person name="Lu C."/>
            <person name="Majoros W.H."/>
            <person name="May G.S."/>
            <person name="Miller B.L."/>
            <person name="Mohamoud Y."/>
            <person name="Molina M."/>
            <person name="Monod M."/>
            <person name="Mouyna I."/>
            <person name="Mulligan S."/>
            <person name="Murphy L.D."/>
            <person name="O'Neil S."/>
            <person name="Paulsen I."/>
            <person name="Penalva M.A."/>
            <person name="Pertea M."/>
            <person name="Price C."/>
            <person name="Pritchard B.L."/>
            <person name="Quail M.A."/>
            <person name="Rabbinowitsch E."/>
            <person name="Rawlins N."/>
            <person name="Rajandream M.A."/>
            <person name="Reichard U."/>
            <person name="Renauld H."/>
            <person name="Robson G.D."/>
            <person name="Rodriguez de Cordoba S."/>
            <person name="Rodriguez-Pena J.M."/>
            <person name="Ronning C.M."/>
            <person name="Rutter S."/>
            <person name="Salzberg S.L."/>
            <person name="Sanchez M."/>
            <person name="Sanchez-Ferrero J.C."/>
            <person name="Saunders D."/>
            <person name="Seeger K."/>
            <person name="Squares R."/>
            <person name="Squares S."/>
            <person name="Takeuchi M."/>
            <person name="Tekaia F."/>
            <person name="Turner G."/>
            <person name="Vazquez de Aldana C.R."/>
            <person name="Weidman J."/>
            <person name="White O."/>
            <person name="Woodward J.R."/>
            <person name="Yu J.-H."/>
            <person name="Fraser C.M."/>
            <person name="Galagan J.E."/>
            <person name="Asai K."/>
            <person name="Machida M."/>
            <person name="Hall N."/>
            <person name="Barrell B.G."/>
            <person name="Denning D.W."/>
        </authorList>
    </citation>
    <scope>NUCLEOTIDE SEQUENCE [LARGE SCALE GENOMIC DNA]</scope>
    <source>
        <strain>ATCC MYA-4609 / CBS 101355 / FGSC A1100 / Af293</strain>
    </source>
</reference>
<reference key="2">
    <citation type="journal article" date="2005" name="Med. Mycol.">
        <title>The ergosterol biosynthesis pathway, transporter genes, and azole resistance in Aspergillus fumigatus.</title>
        <authorList>
            <person name="Ferreira M.E."/>
            <person name="Colombo A.L."/>
            <person name="Paulsen I."/>
            <person name="Ren Q."/>
            <person name="Wortman J."/>
            <person name="Huang J."/>
            <person name="Goldman M.H."/>
            <person name="Goldman G.H."/>
        </authorList>
    </citation>
    <scope>IDENTIFICATION</scope>
    <scope>FUNCTION</scope>
    <scope>PATHWAY</scope>
</reference>
<reference key="3">
    <citation type="journal article" date="2008" name="Steroids">
        <title>Ergosterol biosynthesis pathway in Aspergillus fumigatus.</title>
        <authorList>
            <person name="Alcazar-Fuoli L."/>
            <person name="Mellado E."/>
            <person name="Garcia-Effron G."/>
            <person name="Lopez J.F."/>
            <person name="Grimalt J.O."/>
            <person name="Cuenca-Estrella J.M."/>
            <person name="Rodriguez-Tudela J.L."/>
        </authorList>
    </citation>
    <scope>FUNCTION</scope>
</reference>
<reference key="4">
    <citation type="journal article" date="2017" name="Appl. Environ. Microbiol.">
        <title>Erg4A and Erg4B are required for conidiation and azole resistance via regulation of ergosterol biosynthesis in Aspergillus fumigatus.</title>
        <authorList>
            <person name="Long N."/>
            <person name="Xu X."/>
            <person name="Zeng Q."/>
            <person name="Sang H."/>
            <person name="Lu L."/>
        </authorList>
    </citation>
    <scope>FUNCTION</scope>
    <scope>DISRUPTION PHENOTYPE</scope>
    <scope>SUBCELLULAR LOCATION</scope>
    <scope>INDUCTION</scope>
    <scope>BIOTECHNOLOGY</scope>
    <scope>PATHWAY</scope>
</reference>
<comment type="function">
    <text evidence="4 8 9">Delta(24(24(1)))-sterol reductase; part of the third module of ergosterol biosynthesis pathway that includes the late steps of the pathway (PubMed:27986720). Catalyzes the last step of ergosterol biosynthesis by converting ergosta-5,7,22,24(28)-tetraen-3beta-ol into ergosterol (PubMed:27986720). The third module or late pathway involves the ergosterol synthesis itself through consecutive reactions that mainly occur in the endoplasmic reticulum (ER) membrane. Firstly, the squalene synthase erg9 catalyzes the condensation of 2 farnesyl pyrophosphate moieties to form squalene, which is the precursor of all steroids. Squalene synthase is crucial for balancing the incorporation of farnesyl diphosphate (FPP) into sterol and nonsterol isoprene synthesis. Secondly, squalene is converted into lanosterol by the consecutive action of the squalene epoxidase erg1 and the lanosterol synthase erg7. Then, the delta(24)-sterol C-methyltransferase erg6 methylates lanosterol at C-24 to produce eburicol. Eburicol is the substrate of the sterol 14-alpha demethylase encoded by cyp51A and cyp51B, to yield 4,4,24-trimethyl ergosta-8,14,24(28)-trienol. The C-14 reductase erg24 then reduces the C14=C15 double bond which leads to 4,4-dimethylfecosterol. A sequence of further demethylations at C-4, involving the C-4 demethylation complex containing the C-4 methylsterol oxidases erg25A or erg25B, the sterol-4-alpha-carboxylate 3-dehydrogenase erg26 and the 3-keto-steroid reductase erg27, leads to the production of fecosterol via 4-methylfecosterol. The C-8 sterol isomerase erg2 then catalyzes the reaction which results in unsaturation at C-7 in the B ring of sterols and thus converts fecosterol to episterol. The sterol-C5-desaturase erg3B then catalyzes the introduction of a C-5 double bond in the B ring to produce 5-dehydroepisterol. The 2 other sterol-C5-desaturases, erg3A and erg3C, seem to be less important in ergosterol biosynthesis. The C-22 sterol desaturase erg5 further converts 5-dehydroepisterol into ergosta-5,7,22,24(28)-tetraen-3beta-ol by forming the C-22(23) double bond in the sterol side chain. Finally, ergosta-5,7,22,24(28)-tetraen-3beta-ol is substrate of the C-24(28) sterol reductases erg4A and erg4B to produce ergosterol. Possible alternative sterol biosynthetic pathways might exist from fecosterol to ergosterol, depending on the activities of the erg3 isoforms (Probable) (PubMed:16110826, PubMed:18191972).</text>
</comment>
<comment type="catalytic activity">
    <reaction evidence="10">
        <text>ergosterol + NADP(+) = ergosta-5,7,22,24(28)-tetraen-3beta-ol + NADPH + H(+)</text>
        <dbReference type="Rhea" id="RHEA:18501"/>
        <dbReference type="ChEBI" id="CHEBI:15378"/>
        <dbReference type="ChEBI" id="CHEBI:16933"/>
        <dbReference type="ChEBI" id="CHEBI:18249"/>
        <dbReference type="ChEBI" id="CHEBI:57783"/>
        <dbReference type="ChEBI" id="CHEBI:58349"/>
        <dbReference type="EC" id="1.3.1.71"/>
    </reaction>
    <physiologicalReaction direction="right-to-left" evidence="10">
        <dbReference type="Rhea" id="RHEA:18503"/>
    </physiologicalReaction>
</comment>
<comment type="pathway">
    <text evidence="8">Steroid metabolism; ergosterol biosynthesis.</text>
</comment>
<comment type="subcellular location">
    <subcellularLocation>
        <location evidence="4">Endoplasmic reticulum membrane</location>
        <topology evidence="2">Multi-pass membrane protein</topology>
    </subcellularLocation>
</comment>
<comment type="induction">
    <text evidence="4">Expression is induced in the absence of erg4A.</text>
</comment>
<comment type="disruption phenotype">
    <text evidence="4">Deletion of both erg4A and erg4B results in fluffy colonies with severely impaired conidiation and increased susceptibility to antifungal azoles itraconazole and voriconazole, but does not affect virulence (PubMed:27986720). The double deletion leads also to the loss of ergosterol production and accumulation of the ergosta-5,7,22,24(28)-tetraenol precursor (PubMed:27986720).</text>
</comment>
<comment type="biotechnology">
    <text evidence="4">Inhibition of erg4A and erg4B might be an effective approach for alleviating A.fumigatus infection.</text>
</comment>
<comment type="miscellaneous">
    <text evidence="9">In Aspergillus, the biosynthesis pathway of the sterol precursors leading to the prevalent sterol ergosterol differs from yeast. The ring system of lanosterol in S.cerevisiae is firstly demethylised in three enzymatic steps leading to the intermediate zymosterol and secondly a methyl group is added to zymosterol by the sterol 24-C-methyltransferase to form fecosterol. In Aspergillus, lanosterol is firstly transmethylated by the sterol 24-C-methyltransferase leading to the intermediate eburicol and secondly demethylated in three steps to form fecosterol.</text>
</comment>
<comment type="similarity">
    <text evidence="7">Belongs to the ERG4/ERG24 family.</text>
</comment>
<protein>
    <recommendedName>
        <fullName evidence="6">Delta(24(24(1)))-sterol reductase erg4A</fullName>
        <ecNumber evidence="8">1.3.1.71</ecNumber>
    </recommendedName>
    <alternativeName>
        <fullName evidence="6">C-24(28) sterol reductase erg4A</fullName>
    </alternativeName>
    <alternativeName>
        <fullName evidence="5">Ergosterol biosynthesis protein 4A</fullName>
    </alternativeName>
    <alternativeName>
        <fullName evidence="6">Sterol Delta(24(28))-reductase erg4A</fullName>
    </alternativeName>
</protein>